<dbReference type="EMBL" id="CU459141">
    <property type="protein sequence ID" value="CAM88180.1"/>
    <property type="molecule type" value="Genomic_DNA"/>
</dbReference>
<dbReference type="RefSeq" id="WP_001224256.1">
    <property type="nucleotide sequence ID" value="NZ_JBDGFB010000003.1"/>
</dbReference>
<dbReference type="SMR" id="B0VEC1"/>
<dbReference type="EnsemblBacteria" id="CAM88180">
    <property type="protein sequence ID" value="CAM88180"/>
    <property type="gene ID" value="ABAYE3385"/>
</dbReference>
<dbReference type="KEGG" id="aby:ABAYE3385"/>
<dbReference type="HOGENOM" id="CLU_114306_2_1_6"/>
<dbReference type="GO" id="GO:1990904">
    <property type="term" value="C:ribonucleoprotein complex"/>
    <property type="evidence" value="ECO:0007669"/>
    <property type="project" value="UniProtKB-KW"/>
</dbReference>
<dbReference type="GO" id="GO:0005840">
    <property type="term" value="C:ribosome"/>
    <property type="evidence" value="ECO:0007669"/>
    <property type="project" value="UniProtKB-KW"/>
</dbReference>
<dbReference type="GO" id="GO:0003735">
    <property type="term" value="F:structural constituent of ribosome"/>
    <property type="evidence" value="ECO:0007669"/>
    <property type="project" value="InterPro"/>
</dbReference>
<dbReference type="GO" id="GO:0006412">
    <property type="term" value="P:translation"/>
    <property type="evidence" value="ECO:0007669"/>
    <property type="project" value="UniProtKB-UniRule"/>
</dbReference>
<dbReference type="Gene3D" id="4.10.830.30">
    <property type="entry name" value="Ribosomal protein L31"/>
    <property type="match status" value="1"/>
</dbReference>
<dbReference type="HAMAP" id="MF_00502">
    <property type="entry name" value="Ribosomal_bL31_2"/>
    <property type="match status" value="1"/>
</dbReference>
<dbReference type="InterPro" id="IPR034704">
    <property type="entry name" value="Ribosomal_bL28/bL31-like_sf"/>
</dbReference>
<dbReference type="InterPro" id="IPR002150">
    <property type="entry name" value="Ribosomal_bL31"/>
</dbReference>
<dbReference type="InterPro" id="IPR027493">
    <property type="entry name" value="Ribosomal_bL31_B"/>
</dbReference>
<dbReference type="InterPro" id="IPR042105">
    <property type="entry name" value="Ribosomal_bL31_sf"/>
</dbReference>
<dbReference type="NCBIfam" id="TIGR00105">
    <property type="entry name" value="L31"/>
    <property type="match status" value="1"/>
</dbReference>
<dbReference type="NCBIfam" id="NF002462">
    <property type="entry name" value="PRK01678.1"/>
    <property type="match status" value="1"/>
</dbReference>
<dbReference type="PANTHER" id="PTHR33280">
    <property type="entry name" value="50S RIBOSOMAL PROTEIN L31, CHLOROPLASTIC"/>
    <property type="match status" value="1"/>
</dbReference>
<dbReference type="PANTHER" id="PTHR33280:SF1">
    <property type="entry name" value="LARGE RIBOSOMAL SUBUNIT PROTEIN BL31C"/>
    <property type="match status" value="1"/>
</dbReference>
<dbReference type="Pfam" id="PF01197">
    <property type="entry name" value="Ribosomal_L31"/>
    <property type="match status" value="1"/>
</dbReference>
<dbReference type="PRINTS" id="PR01249">
    <property type="entry name" value="RIBOSOMALL31"/>
</dbReference>
<dbReference type="SUPFAM" id="SSF143800">
    <property type="entry name" value="L28p-like"/>
    <property type="match status" value="1"/>
</dbReference>
<dbReference type="PROSITE" id="PS01143">
    <property type="entry name" value="RIBOSOMAL_L31"/>
    <property type="match status" value="1"/>
</dbReference>
<sequence>MRKDIHPAYQQVLFHDTNADVYFLIGSTIQTKQTKEYQGQVYPYVTLDISSASHPFYTGEVRQASNEGRVASFNKRFARFNRKS</sequence>
<name>RL31B_ACIBY</name>
<accession>B0VEC1</accession>
<proteinExistence type="inferred from homology"/>
<protein>
    <recommendedName>
        <fullName evidence="1">Large ribosomal subunit protein bL31B</fullName>
    </recommendedName>
    <alternativeName>
        <fullName evidence="2">50S ribosomal protein L31 type B</fullName>
    </alternativeName>
</protein>
<gene>
    <name evidence="1" type="primary">rpmE2</name>
    <name type="ordered locus">ABAYE3385</name>
</gene>
<organism>
    <name type="scientific">Acinetobacter baumannii (strain AYE)</name>
    <dbReference type="NCBI Taxonomy" id="509173"/>
    <lineage>
        <taxon>Bacteria</taxon>
        <taxon>Pseudomonadati</taxon>
        <taxon>Pseudomonadota</taxon>
        <taxon>Gammaproteobacteria</taxon>
        <taxon>Moraxellales</taxon>
        <taxon>Moraxellaceae</taxon>
        <taxon>Acinetobacter</taxon>
        <taxon>Acinetobacter calcoaceticus/baumannii complex</taxon>
    </lineage>
</organism>
<comment type="subunit">
    <text evidence="1">Part of the 50S ribosomal subunit.</text>
</comment>
<comment type="similarity">
    <text evidence="1">Belongs to the bacterial ribosomal protein bL31 family. Type B subfamily.</text>
</comment>
<keyword id="KW-0687">Ribonucleoprotein</keyword>
<keyword id="KW-0689">Ribosomal protein</keyword>
<evidence type="ECO:0000255" key="1">
    <source>
        <dbReference type="HAMAP-Rule" id="MF_00502"/>
    </source>
</evidence>
<evidence type="ECO:0000305" key="2"/>
<reference key="1">
    <citation type="journal article" date="2008" name="PLoS ONE">
        <title>Comparative analysis of Acinetobacters: three genomes for three lifestyles.</title>
        <authorList>
            <person name="Vallenet D."/>
            <person name="Nordmann P."/>
            <person name="Barbe V."/>
            <person name="Poirel L."/>
            <person name="Mangenot S."/>
            <person name="Bataille E."/>
            <person name="Dossat C."/>
            <person name="Gas S."/>
            <person name="Kreimeyer A."/>
            <person name="Lenoble P."/>
            <person name="Oztas S."/>
            <person name="Poulain J."/>
            <person name="Segurens B."/>
            <person name="Robert C."/>
            <person name="Abergel C."/>
            <person name="Claverie J.-M."/>
            <person name="Raoult D."/>
            <person name="Medigue C."/>
            <person name="Weissenbach J."/>
            <person name="Cruveiller S."/>
        </authorList>
    </citation>
    <scope>NUCLEOTIDE SEQUENCE [LARGE SCALE GENOMIC DNA]</scope>
    <source>
        <strain>AYE</strain>
    </source>
</reference>
<feature type="chain" id="PRO_1000126778" description="Large ribosomal subunit protein bL31B">
    <location>
        <begin position="1"/>
        <end position="84"/>
    </location>
</feature>